<comment type="function">
    <text evidence="4 7">The coatomer is a cytosolic protein complex that binds to dilysine motifs and reversibly associates with Golgi non-clathrin-coated vesicles, which further mediate biosynthetic protein transport from the ER, via the Golgi up to the trans Golgi network. Coatomer complex is required for budding from Golgi membranes, and is essential for the retrograde Golgi-to-ER transport of dilysine-tagged proteins.</text>
</comment>
<comment type="subunit">
    <text evidence="4 5 6">Oligomeric complex that consists of at least the alpha, beta, beta', gamma, delta, epsilon and zeta subunits. Interacts (via C-terminus) with GEA1 (via N-terminal region) and KEI1 (via C-terminal region).</text>
</comment>
<comment type="interaction">
    <interactant intactId="EBI-4891">
        <id>P32074</id>
    </interactant>
    <interactant intactId="EBI-7539">
        <id>P47102</id>
        <label>GEA1</label>
    </interactant>
    <organismsDiffer>false</organismsDiffer>
    <experiments>6</experiments>
</comment>
<comment type="subcellular location">
    <subcellularLocation>
        <location>Cytoplasm</location>
    </subcellularLocation>
    <subcellularLocation>
        <location>Golgi apparatus membrane</location>
        <topology>Peripheral membrane protein</topology>
        <orientation>Cytoplasmic side</orientation>
    </subcellularLocation>
    <subcellularLocation>
        <location>Cytoplasmic vesicle</location>
        <location>COPI-coated vesicle membrane</location>
        <topology>Peripheral membrane protein</topology>
        <orientation>Cytoplasmic side</orientation>
    </subcellularLocation>
    <subcellularLocation>
        <location>Endosome</location>
    </subcellularLocation>
    <text evidence="1">The coatomer is cytoplasmic or polymerized on the cytoplasmic side of the Golgi, as well as on the vesicles/buds originating from it.</text>
</comment>
<comment type="miscellaneous">
    <text evidence="3">Present with 77900 molecules/cell in log phase SD medium.</text>
</comment>
<comment type="similarity">
    <text evidence="8">Belongs to the COPG family.</text>
</comment>
<keyword id="KW-0963">Cytoplasm</keyword>
<keyword id="KW-0968">Cytoplasmic vesicle</keyword>
<keyword id="KW-0967">Endosome</keyword>
<keyword id="KW-0931">ER-Golgi transport</keyword>
<keyword id="KW-0333">Golgi apparatus</keyword>
<keyword id="KW-1017">Isopeptide bond</keyword>
<keyword id="KW-0472">Membrane</keyword>
<keyword id="KW-0597">Phosphoprotein</keyword>
<keyword id="KW-0653">Protein transport</keyword>
<keyword id="KW-1185">Reference proteome</keyword>
<keyword id="KW-0677">Repeat</keyword>
<keyword id="KW-0813">Transport</keyword>
<keyword id="KW-0832">Ubl conjugation</keyword>
<name>COPG_YEAST</name>
<reference key="1">
    <citation type="journal article" date="1992" name="Nature">
        <title>SEC21 is a gene required for ER to Golgi protein transport that encodes a subunit of a yeast coatomer.</title>
        <authorList>
            <person name="Hosobuchi M.M."/>
            <person name="Kreis T."/>
            <person name="Schekman R."/>
        </authorList>
    </citation>
    <scope>NUCLEOTIDE SEQUENCE [GENOMIC DNA]</scope>
    <scope>FUNCTION</scope>
    <scope>SUBUNIT</scope>
    <scope>SUBCELLULAR LOCATION</scope>
</reference>
<reference key="2">
    <citation type="journal article" date="1997" name="Nature">
        <title>The nucleotide sequence of Saccharomyces cerevisiae chromosome XIV and its evolutionary implications.</title>
        <authorList>
            <person name="Philippsen P."/>
            <person name="Kleine K."/>
            <person name="Poehlmann R."/>
            <person name="Duesterhoeft A."/>
            <person name="Hamberg K."/>
            <person name="Hegemann J.H."/>
            <person name="Obermaier B."/>
            <person name="Urrestarazu L.A."/>
            <person name="Aert R."/>
            <person name="Albermann K."/>
            <person name="Altmann R."/>
            <person name="Andre B."/>
            <person name="Baladron V."/>
            <person name="Ballesta J.P.G."/>
            <person name="Becam A.-M."/>
            <person name="Beinhauer J.D."/>
            <person name="Boskovic J."/>
            <person name="Buitrago M.J."/>
            <person name="Bussereau F."/>
            <person name="Coster F."/>
            <person name="Crouzet M."/>
            <person name="D'Angelo M."/>
            <person name="Dal Pero F."/>
            <person name="De Antoni A."/>
            <person name="del Rey F."/>
            <person name="Doignon F."/>
            <person name="Domdey H."/>
            <person name="Dubois E."/>
            <person name="Fiedler T.A."/>
            <person name="Fleig U."/>
            <person name="Floeth M."/>
            <person name="Fritz C."/>
            <person name="Gaillardin C."/>
            <person name="Garcia-Cantalejo J.M."/>
            <person name="Glansdorff N."/>
            <person name="Goffeau A."/>
            <person name="Gueldener U."/>
            <person name="Herbert C.J."/>
            <person name="Heumann K."/>
            <person name="Heuss-Neitzel D."/>
            <person name="Hilbert H."/>
            <person name="Hinni K."/>
            <person name="Iraqui Houssaini I."/>
            <person name="Jacquet M."/>
            <person name="Jimenez A."/>
            <person name="Jonniaux J.-L."/>
            <person name="Karpfinger-Hartl L."/>
            <person name="Lanfranchi G."/>
            <person name="Lepingle A."/>
            <person name="Levesque H."/>
            <person name="Lyck R."/>
            <person name="Maftahi M."/>
            <person name="Mallet L."/>
            <person name="Maurer C.T.C."/>
            <person name="Messenguy F."/>
            <person name="Mewes H.-W."/>
            <person name="Moestl D."/>
            <person name="Nasr F."/>
            <person name="Nicaud J.-M."/>
            <person name="Niedenthal R.K."/>
            <person name="Pandolfo D."/>
            <person name="Pierard A."/>
            <person name="Piravandi E."/>
            <person name="Planta R.J."/>
            <person name="Pohl T.M."/>
            <person name="Purnelle B."/>
            <person name="Rebischung C."/>
            <person name="Remacha M.A."/>
            <person name="Revuelta J.L."/>
            <person name="Rinke M."/>
            <person name="Saiz J.E."/>
            <person name="Sartorello F."/>
            <person name="Scherens B."/>
            <person name="Sen-Gupta M."/>
            <person name="Soler-Mira A."/>
            <person name="Urbanus J.H.M."/>
            <person name="Valle G."/>
            <person name="Van Dyck L."/>
            <person name="Verhasselt P."/>
            <person name="Vierendeels F."/>
            <person name="Vissers S."/>
            <person name="Voet M."/>
            <person name="Volckaert G."/>
            <person name="Wach A."/>
            <person name="Wambutt R."/>
            <person name="Wedler H."/>
            <person name="Zollner A."/>
            <person name="Hani J."/>
        </authorList>
    </citation>
    <scope>NUCLEOTIDE SEQUENCE [LARGE SCALE GENOMIC DNA]</scope>
    <source>
        <strain>ATCC 204508 / S288c</strain>
    </source>
</reference>
<reference key="3">
    <citation type="journal article" date="2014" name="G3 (Bethesda)">
        <title>The reference genome sequence of Saccharomyces cerevisiae: Then and now.</title>
        <authorList>
            <person name="Engel S.R."/>
            <person name="Dietrich F.S."/>
            <person name="Fisk D.G."/>
            <person name="Binkley G."/>
            <person name="Balakrishnan R."/>
            <person name="Costanzo M.C."/>
            <person name="Dwight S.S."/>
            <person name="Hitz B.C."/>
            <person name="Karra K."/>
            <person name="Nash R.S."/>
            <person name="Weng S."/>
            <person name="Wong E.D."/>
            <person name="Lloyd P."/>
            <person name="Skrzypek M.S."/>
            <person name="Miyasato S.R."/>
            <person name="Simison M."/>
            <person name="Cherry J.M."/>
        </authorList>
    </citation>
    <scope>GENOME REANNOTATION</scope>
    <source>
        <strain>ATCC 204508 / S288c</strain>
    </source>
</reference>
<reference key="4">
    <citation type="journal article" date="1994" name="Cell">
        <title>Coatomer is essential for retrieval of dilysine-tagged proteins to the endoplasmic reticulum.</title>
        <authorList>
            <person name="Letourneur F."/>
            <person name="Gaynor E.C."/>
            <person name="Hennecke S."/>
            <person name="Demolliere C."/>
            <person name="Durden R."/>
            <person name="Emr S.D."/>
            <person name="Riezman H."/>
            <person name="Cosson P."/>
        </authorList>
    </citation>
    <scope>FUNCTION</scope>
</reference>
<reference key="5">
    <citation type="journal article" date="2003" name="Nature">
        <title>Global analysis of protein localization in budding yeast.</title>
        <authorList>
            <person name="Huh W.-K."/>
            <person name="Falvo J.V."/>
            <person name="Gerke L.C."/>
            <person name="Carroll A.S."/>
            <person name="Howson R.W."/>
            <person name="Weissman J.S."/>
            <person name="O'Shea E.K."/>
        </authorList>
    </citation>
    <scope>SUBCELLULAR LOCATION [LARGE SCALE ANALYSIS]</scope>
</reference>
<reference key="6">
    <citation type="journal article" date="2003" name="Nature">
        <title>Global analysis of protein expression in yeast.</title>
        <authorList>
            <person name="Ghaemmaghami S."/>
            <person name="Huh W.-K."/>
            <person name="Bower K."/>
            <person name="Howson R.W."/>
            <person name="Belle A."/>
            <person name="Dephoure N."/>
            <person name="O'Shea E.K."/>
            <person name="Weissman J.S."/>
        </authorList>
    </citation>
    <scope>LEVEL OF PROTEIN EXPRESSION [LARGE SCALE ANALYSIS]</scope>
</reference>
<reference key="7">
    <citation type="journal article" date="2007" name="Mol. Cell. Biol.">
        <title>Involvement of specific COPI subunits in protein sorting from the late endosome to the vacuole in yeast.</title>
        <authorList>
            <person name="Gabriely G."/>
            <person name="Kama R."/>
            <person name="Gerst J.E."/>
        </authorList>
    </citation>
    <scope>SUBCELLULAR LOCATION</scope>
</reference>
<reference key="8">
    <citation type="journal article" date="2008" name="Mol. Cell. Proteomics">
        <title>A multidimensional chromatography technology for in-depth phosphoproteome analysis.</title>
        <authorList>
            <person name="Albuquerque C.P."/>
            <person name="Smolka M.B."/>
            <person name="Payne S.H."/>
            <person name="Bafna V."/>
            <person name="Eng J."/>
            <person name="Zhou H."/>
        </authorList>
    </citation>
    <scope>PHOSPHORYLATION [LARGE SCALE ANALYSIS] AT SER-653</scope>
    <scope>IDENTIFICATION BY MASS SPECTROMETRY [LARGE SCALE ANALYSIS]</scope>
</reference>
<reference key="9">
    <citation type="journal article" date="2009" name="EMBO Rep.">
        <title>A COPI coat subunit interacts directly with an early-Golgi localized Arf exchange factor.</title>
        <authorList>
            <person name="Deng Y."/>
            <person name="Golinelli-Cohen M.P."/>
            <person name="Smirnova E."/>
            <person name="Jackson C.L."/>
        </authorList>
    </citation>
    <scope>INTERACTION WITH GEA1</scope>
</reference>
<reference key="10">
    <citation type="journal article" date="2009" name="Mol. Biol. Cell">
        <title>Kei1: a novel subunit of inositolphosphorylceramide synthase, essential for its enzyme activity and Golgi localization.</title>
        <authorList>
            <person name="Sato K."/>
            <person name="Noda Y."/>
            <person name="Yoda K."/>
        </authorList>
    </citation>
    <scope>INTERACTION WITH KEI1</scope>
</reference>
<reference key="11">
    <citation type="journal article" date="2009" name="Science">
        <title>Global analysis of Cdk1 substrate phosphorylation sites provides insights into evolution.</title>
        <authorList>
            <person name="Holt L.J."/>
            <person name="Tuch B.B."/>
            <person name="Villen J."/>
            <person name="Johnson A.D."/>
            <person name="Gygi S.P."/>
            <person name="Morgan D.O."/>
        </authorList>
    </citation>
    <scope>PHOSPHORYLATION [LARGE SCALE ANALYSIS] AT THR-638; SER-643 AND SER-653</scope>
    <scope>IDENTIFICATION BY MASS SPECTROMETRY [LARGE SCALE ANALYSIS]</scope>
</reference>
<reference key="12">
    <citation type="journal article" date="2012" name="Proteomics">
        <title>Sites of ubiquitin attachment in Saccharomyces cerevisiae.</title>
        <authorList>
            <person name="Starita L.M."/>
            <person name="Lo R.S."/>
            <person name="Eng J.K."/>
            <person name="von Haller P.D."/>
            <person name="Fields S."/>
        </authorList>
    </citation>
    <scope>UBIQUITINATION [LARGE SCALE ANALYSIS] AT LYS-647</scope>
    <scope>IDENTIFICATION BY MASS SPECTROMETRY [LARGE SCALE ANALYSIS]</scope>
</reference>
<dbReference type="EMBL" id="M59708">
    <property type="protein sequence ID" value="AAA34598.1"/>
    <property type="molecule type" value="Genomic_DNA"/>
</dbReference>
<dbReference type="EMBL" id="Z71563">
    <property type="protein sequence ID" value="CAA96204.1"/>
    <property type="molecule type" value="Genomic_DNA"/>
</dbReference>
<dbReference type="EMBL" id="BK006947">
    <property type="protein sequence ID" value="DAA10272.1"/>
    <property type="molecule type" value="Genomic_DNA"/>
</dbReference>
<dbReference type="PIR" id="S63261">
    <property type="entry name" value="S63261"/>
</dbReference>
<dbReference type="RefSeq" id="NP_014112.1">
    <property type="nucleotide sequence ID" value="NM_001183125.1"/>
</dbReference>
<dbReference type="SMR" id="P32074"/>
<dbReference type="BioGRID" id="35550">
    <property type="interactions" value="197"/>
</dbReference>
<dbReference type="ComplexPortal" id="CPX-1652">
    <property type="entry name" value="COPI vesicle coat complex"/>
</dbReference>
<dbReference type="DIP" id="DIP-1611N"/>
<dbReference type="FunCoup" id="P32074">
    <property type="interactions" value="1503"/>
</dbReference>
<dbReference type="IntAct" id="P32074">
    <property type="interactions" value="28"/>
</dbReference>
<dbReference type="MINT" id="P32074"/>
<dbReference type="STRING" id="4932.YNL287W"/>
<dbReference type="iPTMnet" id="P32074"/>
<dbReference type="PaxDb" id="4932-YNL287W"/>
<dbReference type="PeptideAtlas" id="P32074"/>
<dbReference type="EnsemblFungi" id="YNL287W_mRNA">
    <property type="protein sequence ID" value="YNL287W"/>
    <property type="gene ID" value="YNL287W"/>
</dbReference>
<dbReference type="GeneID" id="855429"/>
<dbReference type="KEGG" id="sce:YNL287W"/>
<dbReference type="AGR" id="SGD:S000005231"/>
<dbReference type="SGD" id="S000005231">
    <property type="gene designation" value="SEC21"/>
</dbReference>
<dbReference type="VEuPathDB" id="FungiDB:YNL287W"/>
<dbReference type="eggNOG" id="KOG1078">
    <property type="taxonomic scope" value="Eukaryota"/>
</dbReference>
<dbReference type="GeneTree" id="ENSGT00390000016313"/>
<dbReference type="HOGENOM" id="CLU_010353_2_0_1"/>
<dbReference type="InParanoid" id="P32074"/>
<dbReference type="OMA" id="DFIEDCE"/>
<dbReference type="OrthoDB" id="1074925at2759"/>
<dbReference type="BioCyc" id="YEAST:G3O-33277-MONOMER"/>
<dbReference type="Reactome" id="R-SCE-6807878">
    <property type="pathway name" value="COPI-mediated anterograde transport"/>
</dbReference>
<dbReference type="Reactome" id="R-SCE-6811434">
    <property type="pathway name" value="COPI-dependent Golgi-to-ER retrograde traffic"/>
</dbReference>
<dbReference type="BioGRID-ORCS" id="855429">
    <property type="hits" value="3 hits in 10 CRISPR screens"/>
</dbReference>
<dbReference type="PRO" id="PR:P32074"/>
<dbReference type="Proteomes" id="UP000002311">
    <property type="component" value="Chromosome XIV"/>
</dbReference>
<dbReference type="RNAct" id="P32074">
    <property type="molecule type" value="protein"/>
</dbReference>
<dbReference type="GO" id="GO:0030126">
    <property type="term" value="C:COPI vesicle coat"/>
    <property type="evidence" value="ECO:0000314"/>
    <property type="project" value="SGD"/>
</dbReference>
<dbReference type="GO" id="GO:0005783">
    <property type="term" value="C:endoplasmic reticulum"/>
    <property type="evidence" value="ECO:0000318"/>
    <property type="project" value="GO_Central"/>
</dbReference>
<dbReference type="GO" id="GO:0005793">
    <property type="term" value="C:endoplasmic reticulum-Golgi intermediate compartment"/>
    <property type="evidence" value="ECO:0000318"/>
    <property type="project" value="GO_Central"/>
</dbReference>
<dbReference type="GO" id="GO:0005768">
    <property type="term" value="C:endosome"/>
    <property type="evidence" value="ECO:0007669"/>
    <property type="project" value="UniProtKB-SubCell"/>
</dbReference>
<dbReference type="GO" id="GO:0000139">
    <property type="term" value="C:Golgi membrane"/>
    <property type="evidence" value="ECO:0000318"/>
    <property type="project" value="GO_Central"/>
</dbReference>
<dbReference type="GO" id="GO:0005198">
    <property type="term" value="F:structural molecule activity"/>
    <property type="evidence" value="ECO:0007669"/>
    <property type="project" value="InterPro"/>
</dbReference>
<dbReference type="GO" id="GO:0006888">
    <property type="term" value="P:endoplasmic reticulum to Golgi vesicle-mediated transport"/>
    <property type="evidence" value="ECO:0000315"/>
    <property type="project" value="SGD"/>
</dbReference>
<dbReference type="GO" id="GO:0006891">
    <property type="term" value="P:intra-Golgi vesicle-mediated transport"/>
    <property type="evidence" value="ECO:0000318"/>
    <property type="project" value="GO_Central"/>
</dbReference>
<dbReference type="GO" id="GO:0006886">
    <property type="term" value="P:intracellular protein transport"/>
    <property type="evidence" value="ECO:0007669"/>
    <property type="project" value="InterPro"/>
</dbReference>
<dbReference type="GO" id="GO:0009306">
    <property type="term" value="P:protein secretion"/>
    <property type="evidence" value="ECO:0000318"/>
    <property type="project" value="GO_Central"/>
</dbReference>
<dbReference type="GO" id="GO:0006890">
    <property type="term" value="P:retrograde vesicle-mediated transport, Golgi to endoplasmic reticulum"/>
    <property type="evidence" value="ECO:0000315"/>
    <property type="project" value="SGD"/>
</dbReference>
<dbReference type="FunFam" id="1.25.10.10:FF:000368">
    <property type="entry name" value="Coatomer subunit gamma"/>
    <property type="match status" value="1"/>
</dbReference>
<dbReference type="FunFam" id="2.60.40.1480:FF:000001">
    <property type="entry name" value="Coatomer subunit gamma"/>
    <property type="match status" value="1"/>
</dbReference>
<dbReference type="FunFam" id="3.30.310.10:FF:000008">
    <property type="entry name" value="Coatomer subunit gamma"/>
    <property type="match status" value="1"/>
</dbReference>
<dbReference type="Gene3D" id="2.60.40.1480">
    <property type="entry name" value="Coatomer, gamma subunit, appendage domain"/>
    <property type="match status" value="1"/>
</dbReference>
<dbReference type="Gene3D" id="1.25.10.10">
    <property type="entry name" value="Leucine-rich Repeat Variant"/>
    <property type="match status" value="2"/>
</dbReference>
<dbReference type="Gene3D" id="3.30.310.10">
    <property type="entry name" value="TATA-Binding Protein"/>
    <property type="match status" value="1"/>
</dbReference>
<dbReference type="InterPro" id="IPR011989">
    <property type="entry name" value="ARM-like"/>
</dbReference>
<dbReference type="InterPro" id="IPR016024">
    <property type="entry name" value="ARM-type_fold"/>
</dbReference>
<dbReference type="InterPro" id="IPR002553">
    <property type="entry name" value="Clathrin/coatomer_adapt-like_N"/>
</dbReference>
<dbReference type="InterPro" id="IPR013041">
    <property type="entry name" value="Clathrin_app_Ig-like_sf"/>
</dbReference>
<dbReference type="InterPro" id="IPR009028">
    <property type="entry name" value="Coatomer/calthrin_app_sub_C"/>
</dbReference>
<dbReference type="InterPro" id="IPR032154">
    <property type="entry name" value="Coatomer_g_Cpla"/>
</dbReference>
<dbReference type="InterPro" id="IPR017106">
    <property type="entry name" value="Coatomer_gsu"/>
</dbReference>
<dbReference type="InterPro" id="IPR013040">
    <property type="entry name" value="Coatomer_gsu_app_Ig-like_dom"/>
</dbReference>
<dbReference type="InterPro" id="IPR037067">
    <property type="entry name" value="Coatomer_gsu_app_sf"/>
</dbReference>
<dbReference type="InterPro" id="IPR012295">
    <property type="entry name" value="TBP_dom_sf"/>
</dbReference>
<dbReference type="PANTHER" id="PTHR10261">
    <property type="entry name" value="COATOMER SUBUNIT GAMMA"/>
    <property type="match status" value="1"/>
</dbReference>
<dbReference type="PANTHER" id="PTHR10261:SF0">
    <property type="entry name" value="COATOMER SUBUNIT GAMMA-2"/>
    <property type="match status" value="1"/>
</dbReference>
<dbReference type="Pfam" id="PF01602">
    <property type="entry name" value="Adaptin_N"/>
    <property type="match status" value="1"/>
</dbReference>
<dbReference type="Pfam" id="PF16381">
    <property type="entry name" value="Coatomer_g_Cpla"/>
    <property type="match status" value="1"/>
</dbReference>
<dbReference type="Pfam" id="PF08752">
    <property type="entry name" value="COP-gamma_platf"/>
    <property type="match status" value="1"/>
</dbReference>
<dbReference type="PIRSF" id="PIRSF037093">
    <property type="entry name" value="Coatomer_gamma_subunit"/>
    <property type="match status" value="1"/>
</dbReference>
<dbReference type="SUPFAM" id="SSF48371">
    <property type="entry name" value="ARM repeat"/>
    <property type="match status" value="1"/>
</dbReference>
<dbReference type="SUPFAM" id="SSF49348">
    <property type="entry name" value="Clathrin adaptor appendage domain"/>
    <property type="match status" value="1"/>
</dbReference>
<dbReference type="SUPFAM" id="SSF55711">
    <property type="entry name" value="Subdomain of clathrin and coatomer appendage domain"/>
    <property type="match status" value="1"/>
</dbReference>
<accession>P32074</accession>
<accession>D6W0Q6</accession>
<organism>
    <name type="scientific">Saccharomyces cerevisiae (strain ATCC 204508 / S288c)</name>
    <name type="common">Baker's yeast</name>
    <dbReference type="NCBI Taxonomy" id="559292"/>
    <lineage>
        <taxon>Eukaryota</taxon>
        <taxon>Fungi</taxon>
        <taxon>Dikarya</taxon>
        <taxon>Ascomycota</taxon>
        <taxon>Saccharomycotina</taxon>
        <taxon>Saccharomycetes</taxon>
        <taxon>Saccharomycetales</taxon>
        <taxon>Saccharomycetaceae</taxon>
        <taxon>Saccharomyces</taxon>
    </lineage>
</organism>
<feature type="chain" id="PRO_0000193861" description="Coatomer subunit gamma">
    <location>
        <begin position="1"/>
        <end position="935"/>
    </location>
</feature>
<feature type="repeat" description="HEAT 1">
    <location>
        <begin position="258"/>
        <end position="296"/>
    </location>
</feature>
<feature type="repeat" description="HEAT 2">
    <location>
        <begin position="337"/>
        <end position="372"/>
    </location>
</feature>
<feature type="repeat" description="HEAT 3">
    <location>
        <begin position="373"/>
        <end position="410"/>
    </location>
</feature>
<feature type="repeat" description="HEAT 4">
    <location>
        <begin position="412"/>
        <end position="449"/>
    </location>
</feature>
<feature type="repeat" description="HEAT 5">
    <location>
        <begin position="524"/>
        <end position="562"/>
    </location>
</feature>
<feature type="region of interest" description="Disordered" evidence="2">
    <location>
        <begin position="630"/>
        <end position="656"/>
    </location>
</feature>
<feature type="modified residue" description="Phosphothreonine" evidence="10">
    <location>
        <position position="638"/>
    </location>
</feature>
<feature type="modified residue" description="Phosphoserine" evidence="10">
    <location>
        <position position="643"/>
    </location>
</feature>
<feature type="modified residue" description="Phosphoserine" evidence="9 10">
    <location>
        <position position="653"/>
    </location>
</feature>
<feature type="cross-link" description="Glycyl lysine isopeptide (Lys-Gly) (interchain with G-Cter in ubiquitin)" evidence="11">
    <location>
        <position position="647"/>
    </location>
</feature>
<feature type="sequence conflict" description="In Ref. 1; AAA34598." evidence="8" ref="1">
    <original>D</original>
    <variation>N</variation>
    <location>
        <position position="353"/>
    </location>
</feature>
<protein>
    <recommendedName>
        <fullName>Coatomer subunit gamma</fullName>
    </recommendedName>
    <alternativeName>
        <fullName>Gamma-coat protein</fullName>
        <shortName>Gamma-COP</shortName>
    </alternativeName>
</protein>
<proteinExistence type="evidence at protein level"/>
<evidence type="ECO:0000250" key="1"/>
<evidence type="ECO:0000256" key="2">
    <source>
        <dbReference type="SAM" id="MobiDB-lite"/>
    </source>
</evidence>
<evidence type="ECO:0000269" key="3">
    <source>
    </source>
</evidence>
<evidence type="ECO:0000269" key="4">
    <source>
    </source>
</evidence>
<evidence type="ECO:0000269" key="5">
    <source>
    </source>
</evidence>
<evidence type="ECO:0000269" key="6">
    <source>
    </source>
</evidence>
<evidence type="ECO:0000269" key="7">
    <source>
    </source>
</evidence>
<evidence type="ECO:0000305" key="8"/>
<evidence type="ECO:0007744" key="9">
    <source>
    </source>
</evidence>
<evidence type="ECO:0007744" key="10">
    <source>
    </source>
</evidence>
<evidence type="ECO:0007744" key="11">
    <source>
    </source>
</evidence>
<gene>
    <name type="primary">SEC21</name>
    <name type="ordered locus">YNL287W</name>
    <name type="ORF">N0543</name>
</gene>
<sequence>MSAHTYKKFENSTSGDLPDKMTIYQDCMNTFNESPVNSKRCRLLISRLLRLLAQGETFPQNEATALFFSISKLFQHQNDPLRQAVYLAIKELSGISEDVLMATSSIMKDVQNGSDLIKPDAIRSLTYVLDESTAFSAERLLKSAVVSRHPSISSAALCTSYHLLPISEVTIRRFTNETQEAVLDLKQFPNQHGNSEYYPNSTYISQYHALGLLYQLKKTDKMALLKLVRHFSENNSMKNQLAKVELVKIVNDLIYRDPQLFSQFRPLLSDWLSNKFESVQLETAKLITSFATRNSRLVAPELYAAAISALQSLLTVPRVSSRFAALRILNRISMVSPEKIVVCNPELESLINDSNRNISTYAITTLLKTGTSKNISSLISTITNFIHDVSDDFKIIIIDAVRTLSLNFPQEWKSILNFLIDVLKNSEGGFKFKNSIVEALIDIVSFVPQSKELALENLCDFIEDCEFNEILVRILHLLGKEGPSAPNPSLYVRHIYNRVVLENSIIRSAAVVALSKFALTKNDPTLYESIISLLKRIANDKDDEVRDRATIALEFIDSARNKDDVIAQNLIESKYFYDIPSLESKLSSYISSNTDSFATAFDVNQVRKFTEDEMKAINLKRKQEQIFNQKSETTLDTTPEAESVPEKRADANSFAGPNLDDHQEDLLATKYADELLSIEQIKPFGQLVNSSRAISLTEPEAEFVVRGVKHLFKDNVVLQFNITNTLTDIALDNVSVVCTPEISDEAELEELFTLQVDRLLPSEEAACYVAFKKLDEIVMEGFLNNLTFTTKEINPDTNEPFDGDEGFQDEYEIDSIFLNAGDYVKSSFTGNFSATFDELPCEEVAVFNIQEDLSIQEVVDKIILNSSCLPVESTQFAPSDSNSHTLKLFGKSALTGSKVALQIKMIKSSKGLALKVHGKGEDSLLCSDLVNGLMQ</sequence>